<comment type="function">
    <text evidence="1">Probably involved in the biogenesis of the COX complex.</text>
</comment>
<comment type="subcellular location">
    <subcellularLocation>
        <location evidence="1">Mitochondrion inner membrane</location>
        <topology evidence="1">Multi-pass membrane protein</topology>
    </subcellularLocation>
</comment>
<comment type="similarity">
    <text evidence="3">Belongs to the SURF1 family.</text>
</comment>
<evidence type="ECO:0000250" key="1"/>
<evidence type="ECO:0000255" key="2"/>
<evidence type="ECO:0000305" key="3"/>
<dbReference type="EMBL" id="HE601367">
    <property type="protein sequence ID" value="CAP39050.1"/>
    <property type="molecule type" value="Genomic_DNA"/>
</dbReference>
<dbReference type="SMR" id="A8Y2C9"/>
<dbReference type="FunCoup" id="A8Y2C9">
    <property type="interactions" value="1607"/>
</dbReference>
<dbReference type="STRING" id="6238.A8Y2C9"/>
<dbReference type="EnsemblMetazoa" id="CBG22468.1">
    <property type="protein sequence ID" value="CBG22468.1"/>
    <property type="gene ID" value="WBGene00041021"/>
</dbReference>
<dbReference type="KEGG" id="cbr:CBG_22468"/>
<dbReference type="CTD" id="8583050"/>
<dbReference type="WormBase" id="CBG22468">
    <property type="protein sequence ID" value="CBP20406"/>
    <property type="gene ID" value="WBGene00041021"/>
    <property type="gene designation" value="Cbr-sft-1"/>
</dbReference>
<dbReference type="eggNOG" id="KOG1563">
    <property type="taxonomic scope" value="Eukaryota"/>
</dbReference>
<dbReference type="HOGENOM" id="CLU_047737_4_0_1"/>
<dbReference type="InParanoid" id="A8Y2C9"/>
<dbReference type="OMA" id="WYSRDVA"/>
<dbReference type="Proteomes" id="UP000008549">
    <property type="component" value="Unassembled WGS sequence"/>
</dbReference>
<dbReference type="GO" id="GO:0005743">
    <property type="term" value="C:mitochondrial inner membrane"/>
    <property type="evidence" value="ECO:0007669"/>
    <property type="project" value="UniProtKB-SubCell"/>
</dbReference>
<dbReference type="GO" id="GO:0005739">
    <property type="term" value="C:mitochondrion"/>
    <property type="evidence" value="ECO:0000318"/>
    <property type="project" value="GO_Central"/>
</dbReference>
<dbReference type="GO" id="GO:0033617">
    <property type="term" value="P:mitochondrial cytochrome c oxidase assembly"/>
    <property type="evidence" value="ECO:0000318"/>
    <property type="project" value="GO_Central"/>
</dbReference>
<dbReference type="CDD" id="cd06662">
    <property type="entry name" value="SURF1"/>
    <property type="match status" value="1"/>
</dbReference>
<dbReference type="InterPro" id="IPR002994">
    <property type="entry name" value="Surf1/Shy1"/>
</dbReference>
<dbReference type="InterPro" id="IPR045214">
    <property type="entry name" value="Surf1/Surf4"/>
</dbReference>
<dbReference type="PANTHER" id="PTHR23427">
    <property type="entry name" value="SURFEIT LOCUS PROTEIN"/>
    <property type="match status" value="1"/>
</dbReference>
<dbReference type="PANTHER" id="PTHR23427:SF2">
    <property type="entry name" value="SURFEIT LOCUS PROTEIN 1"/>
    <property type="match status" value="1"/>
</dbReference>
<dbReference type="Pfam" id="PF02104">
    <property type="entry name" value="SURF1"/>
    <property type="match status" value="1"/>
</dbReference>
<dbReference type="PROSITE" id="PS50895">
    <property type="entry name" value="SURF1"/>
    <property type="match status" value="1"/>
</dbReference>
<accession>A8Y2C9</accession>
<proteinExistence type="inferred from homology"/>
<organism>
    <name type="scientific">Caenorhabditis briggsae</name>
    <dbReference type="NCBI Taxonomy" id="6238"/>
    <lineage>
        <taxon>Eukaryota</taxon>
        <taxon>Metazoa</taxon>
        <taxon>Ecdysozoa</taxon>
        <taxon>Nematoda</taxon>
        <taxon>Chromadorea</taxon>
        <taxon>Rhabditida</taxon>
        <taxon>Rhabditina</taxon>
        <taxon>Rhabditomorpha</taxon>
        <taxon>Rhabditoidea</taxon>
        <taxon>Rhabditidae</taxon>
        <taxon>Peloderinae</taxon>
        <taxon>Caenorhabditis</taxon>
    </lineage>
</organism>
<keyword id="KW-0472">Membrane</keyword>
<keyword id="KW-0496">Mitochondrion</keyword>
<keyword id="KW-0999">Mitochondrion inner membrane</keyword>
<keyword id="KW-1185">Reference proteome</keyword>
<keyword id="KW-0812">Transmembrane</keyword>
<keyword id="KW-1133">Transmembrane helix</keyword>
<reference key="1">
    <citation type="journal article" date="2003" name="PLoS Biol.">
        <title>The genome sequence of Caenorhabditis briggsae: a platform for comparative genomics.</title>
        <authorList>
            <person name="Stein L.D."/>
            <person name="Bao Z."/>
            <person name="Blasiar D."/>
            <person name="Blumenthal T."/>
            <person name="Brent M.R."/>
            <person name="Chen N."/>
            <person name="Chinwalla A."/>
            <person name="Clarke L."/>
            <person name="Clee C."/>
            <person name="Coghlan A."/>
            <person name="Coulson A."/>
            <person name="D'Eustachio P."/>
            <person name="Fitch D.H.A."/>
            <person name="Fulton L.A."/>
            <person name="Fulton R.E."/>
            <person name="Griffiths-Jones S."/>
            <person name="Harris T.W."/>
            <person name="Hillier L.W."/>
            <person name="Kamath R."/>
            <person name="Kuwabara P.E."/>
            <person name="Mardis E.R."/>
            <person name="Marra M.A."/>
            <person name="Miner T.L."/>
            <person name="Minx P."/>
            <person name="Mullikin J.C."/>
            <person name="Plumb R.W."/>
            <person name="Rogers J."/>
            <person name="Schein J.E."/>
            <person name="Sohrmann M."/>
            <person name="Spieth J."/>
            <person name="Stajich J.E."/>
            <person name="Wei C."/>
            <person name="Willey D."/>
            <person name="Wilson R.K."/>
            <person name="Durbin R.M."/>
            <person name="Waterston R.H."/>
        </authorList>
    </citation>
    <scope>NUCLEOTIDE SEQUENCE [LARGE SCALE GENOMIC DNA]</scope>
    <source>
        <strain>AF16</strain>
    </source>
</reference>
<sequence length="317" mass="36389">MAFRWAIQMALRRGGGGGQRLLLTQHQHQNYQFFKTSSSTQFSTRNSQILDLDTPQKSPNFSENSKNKKSKKIEWSTGSILMLGLPAFAFSLGVWQIYRLIWKLELIEHLKSRLSQEAIELPDDLSSSSLEPLEYCRVRVTGEFLHQKEFVISPRGRFDPAKKTSASVGSMLSENEMSSHGGHLITPFRLKNTGKVILINRGWLPTFYFDPESHAKTNPQGTVILEAIVRKTEQRPQFVGQNVPEQGVWYYRDLEQMAKWHGTEPVWLDAAYETTVPGGPIGGQTNINVRNEHMNYLTTWFTLTLVTMLMWIHKFRK</sequence>
<feature type="chain" id="PRO_0000344498" description="SURF1-like protein">
    <location>
        <begin position="1"/>
        <end position="317"/>
    </location>
</feature>
<feature type="transmembrane region" description="Helical" evidence="2">
    <location>
        <begin position="78"/>
        <end position="98"/>
    </location>
</feature>
<feature type="transmembrane region" description="Helical" evidence="2">
    <location>
        <begin position="293"/>
        <end position="313"/>
    </location>
</feature>
<protein>
    <recommendedName>
        <fullName>SURF1-like protein</fullName>
    </recommendedName>
</protein>
<gene>
    <name type="primary">sft-1</name>
    <name type="ORF">CBG22468</name>
</gene>
<name>SURF1_CAEBR</name>